<name>UBIG_PROMH</name>
<evidence type="ECO:0000255" key="1">
    <source>
        <dbReference type="HAMAP-Rule" id="MF_00472"/>
    </source>
</evidence>
<proteinExistence type="inferred from homology"/>
<comment type="function">
    <text evidence="1">O-methyltransferase that catalyzes the 2 O-methylation steps in the ubiquinone biosynthetic pathway.</text>
</comment>
<comment type="catalytic activity">
    <reaction evidence="1">
        <text>a 3-demethylubiquinol + S-adenosyl-L-methionine = a ubiquinol + S-adenosyl-L-homocysteine + H(+)</text>
        <dbReference type="Rhea" id="RHEA:44380"/>
        <dbReference type="Rhea" id="RHEA-COMP:9566"/>
        <dbReference type="Rhea" id="RHEA-COMP:10914"/>
        <dbReference type="ChEBI" id="CHEBI:15378"/>
        <dbReference type="ChEBI" id="CHEBI:17976"/>
        <dbReference type="ChEBI" id="CHEBI:57856"/>
        <dbReference type="ChEBI" id="CHEBI:59789"/>
        <dbReference type="ChEBI" id="CHEBI:84422"/>
        <dbReference type="EC" id="2.1.1.64"/>
    </reaction>
</comment>
<comment type="catalytic activity">
    <reaction evidence="1">
        <text>a 3-(all-trans-polyprenyl)benzene-1,2-diol + S-adenosyl-L-methionine = a 2-methoxy-6-(all-trans-polyprenyl)phenol + S-adenosyl-L-homocysteine + H(+)</text>
        <dbReference type="Rhea" id="RHEA:31411"/>
        <dbReference type="Rhea" id="RHEA-COMP:9550"/>
        <dbReference type="Rhea" id="RHEA-COMP:9551"/>
        <dbReference type="ChEBI" id="CHEBI:15378"/>
        <dbReference type="ChEBI" id="CHEBI:57856"/>
        <dbReference type="ChEBI" id="CHEBI:59789"/>
        <dbReference type="ChEBI" id="CHEBI:62729"/>
        <dbReference type="ChEBI" id="CHEBI:62731"/>
        <dbReference type="EC" id="2.1.1.222"/>
    </reaction>
</comment>
<comment type="pathway">
    <text evidence="1">Cofactor biosynthesis; ubiquinone biosynthesis.</text>
</comment>
<comment type="similarity">
    <text evidence="1">Belongs to the methyltransferase superfamily. UbiG/COQ3 family.</text>
</comment>
<keyword id="KW-0489">Methyltransferase</keyword>
<keyword id="KW-1185">Reference proteome</keyword>
<keyword id="KW-0949">S-adenosyl-L-methionine</keyword>
<keyword id="KW-0808">Transferase</keyword>
<keyword id="KW-0831">Ubiquinone biosynthesis</keyword>
<organism>
    <name type="scientific">Proteus mirabilis (strain HI4320)</name>
    <dbReference type="NCBI Taxonomy" id="529507"/>
    <lineage>
        <taxon>Bacteria</taxon>
        <taxon>Pseudomonadati</taxon>
        <taxon>Pseudomonadota</taxon>
        <taxon>Gammaproteobacteria</taxon>
        <taxon>Enterobacterales</taxon>
        <taxon>Morganellaceae</taxon>
        <taxon>Proteus</taxon>
    </lineage>
</organism>
<accession>B4EZ30</accession>
<dbReference type="EC" id="2.1.1.222" evidence="1"/>
<dbReference type="EC" id="2.1.1.64" evidence="1"/>
<dbReference type="EMBL" id="AM942759">
    <property type="protein sequence ID" value="CAR43608.1"/>
    <property type="molecule type" value="Genomic_DNA"/>
</dbReference>
<dbReference type="RefSeq" id="WP_004243650.1">
    <property type="nucleotide sequence ID" value="NC_010554.1"/>
</dbReference>
<dbReference type="SMR" id="B4EZ30"/>
<dbReference type="EnsemblBacteria" id="CAR43608">
    <property type="protein sequence ID" value="CAR43608"/>
    <property type="gene ID" value="PMI1733"/>
</dbReference>
<dbReference type="GeneID" id="6801432"/>
<dbReference type="KEGG" id="pmr:PMI1733"/>
<dbReference type="eggNOG" id="COG2227">
    <property type="taxonomic scope" value="Bacteria"/>
</dbReference>
<dbReference type="HOGENOM" id="CLU_042432_5_0_6"/>
<dbReference type="UniPathway" id="UPA00232"/>
<dbReference type="Proteomes" id="UP000008319">
    <property type="component" value="Chromosome"/>
</dbReference>
<dbReference type="GO" id="GO:0102208">
    <property type="term" value="F:2-polyprenyl-6-hydroxyphenol methylase activity"/>
    <property type="evidence" value="ECO:0007669"/>
    <property type="project" value="UniProtKB-EC"/>
</dbReference>
<dbReference type="GO" id="GO:0061542">
    <property type="term" value="F:3-demethylubiquinol 3-O-methyltransferase activity"/>
    <property type="evidence" value="ECO:0007669"/>
    <property type="project" value="UniProtKB-UniRule"/>
</dbReference>
<dbReference type="GO" id="GO:0010420">
    <property type="term" value="F:polyprenyldihydroxybenzoate methyltransferase activity"/>
    <property type="evidence" value="ECO:0007669"/>
    <property type="project" value="InterPro"/>
</dbReference>
<dbReference type="GO" id="GO:0032259">
    <property type="term" value="P:methylation"/>
    <property type="evidence" value="ECO:0007669"/>
    <property type="project" value="UniProtKB-KW"/>
</dbReference>
<dbReference type="CDD" id="cd02440">
    <property type="entry name" value="AdoMet_MTases"/>
    <property type="match status" value="1"/>
</dbReference>
<dbReference type="FunFam" id="3.40.50.150:FF:000028">
    <property type="entry name" value="Ubiquinone biosynthesis O-methyltransferase"/>
    <property type="match status" value="1"/>
</dbReference>
<dbReference type="Gene3D" id="3.40.50.150">
    <property type="entry name" value="Vaccinia Virus protein VP39"/>
    <property type="match status" value="1"/>
</dbReference>
<dbReference type="HAMAP" id="MF_00472">
    <property type="entry name" value="UbiG"/>
    <property type="match status" value="1"/>
</dbReference>
<dbReference type="InterPro" id="IPR029063">
    <property type="entry name" value="SAM-dependent_MTases_sf"/>
</dbReference>
<dbReference type="InterPro" id="IPR010233">
    <property type="entry name" value="UbiG_MeTrfase"/>
</dbReference>
<dbReference type="NCBIfam" id="TIGR01983">
    <property type="entry name" value="UbiG"/>
    <property type="match status" value="1"/>
</dbReference>
<dbReference type="PANTHER" id="PTHR43464">
    <property type="entry name" value="METHYLTRANSFERASE"/>
    <property type="match status" value="1"/>
</dbReference>
<dbReference type="PANTHER" id="PTHR43464:SF19">
    <property type="entry name" value="UBIQUINONE BIOSYNTHESIS O-METHYLTRANSFERASE, MITOCHONDRIAL"/>
    <property type="match status" value="1"/>
</dbReference>
<dbReference type="Pfam" id="PF13489">
    <property type="entry name" value="Methyltransf_23"/>
    <property type="match status" value="1"/>
</dbReference>
<dbReference type="SUPFAM" id="SSF53335">
    <property type="entry name" value="S-adenosyl-L-methionine-dependent methyltransferases"/>
    <property type="match status" value="1"/>
</dbReference>
<protein>
    <recommendedName>
        <fullName evidence="1">Ubiquinone biosynthesis O-methyltransferase</fullName>
    </recommendedName>
    <alternativeName>
        <fullName evidence="1">2-polyprenyl-6-hydroxyphenol methylase</fullName>
        <ecNumber evidence="1">2.1.1.222</ecNumber>
    </alternativeName>
    <alternativeName>
        <fullName evidence="1">3-demethylubiquinone 3-O-methyltransferase</fullName>
        <ecNumber evidence="1">2.1.1.64</ecNumber>
    </alternativeName>
</protein>
<sequence>MNDKTTSLHANVDQHEIDKFESVASRWWDLEGEFKPLHRINPLRLNYIQERADGLFGKKVLDVGCGGGILSESMARVGAEVTGLDMGKEPLEVARLHSLETGIPVTYIQDTVENHAAEYPQRYDVVTCMEMLEHVPDPSSIVRSCAKLVKPGGHVFFSTINRNKKAWFMLVVGAEYILNMVPKGTHDANKFIRPSELLSWVDETNLRSKNMIGLHYNPITDKFRLAPNVDVNYMVHTQATDNSDL</sequence>
<reference key="1">
    <citation type="journal article" date="2008" name="J. Bacteriol.">
        <title>Complete genome sequence of uropathogenic Proteus mirabilis, a master of both adherence and motility.</title>
        <authorList>
            <person name="Pearson M.M."/>
            <person name="Sebaihia M."/>
            <person name="Churcher C."/>
            <person name="Quail M.A."/>
            <person name="Seshasayee A.S."/>
            <person name="Luscombe N.M."/>
            <person name="Abdellah Z."/>
            <person name="Arrosmith C."/>
            <person name="Atkin B."/>
            <person name="Chillingworth T."/>
            <person name="Hauser H."/>
            <person name="Jagels K."/>
            <person name="Moule S."/>
            <person name="Mungall K."/>
            <person name="Norbertczak H."/>
            <person name="Rabbinowitsch E."/>
            <person name="Walker D."/>
            <person name="Whithead S."/>
            <person name="Thomson N.R."/>
            <person name="Rather P.N."/>
            <person name="Parkhill J."/>
            <person name="Mobley H.L.T."/>
        </authorList>
    </citation>
    <scope>NUCLEOTIDE SEQUENCE [LARGE SCALE GENOMIC DNA]</scope>
    <source>
        <strain>HI4320</strain>
    </source>
</reference>
<feature type="chain" id="PRO_1000199689" description="Ubiquinone biosynthesis O-methyltransferase">
    <location>
        <begin position="1"/>
        <end position="245"/>
    </location>
</feature>
<feature type="binding site" evidence="1">
    <location>
        <position position="44"/>
    </location>
    <ligand>
        <name>S-adenosyl-L-methionine</name>
        <dbReference type="ChEBI" id="CHEBI:59789"/>
    </ligand>
</feature>
<feature type="binding site" evidence="1">
    <location>
        <position position="64"/>
    </location>
    <ligand>
        <name>S-adenosyl-L-methionine</name>
        <dbReference type="ChEBI" id="CHEBI:59789"/>
    </ligand>
</feature>
<feature type="binding site" evidence="1">
    <location>
        <position position="85"/>
    </location>
    <ligand>
        <name>S-adenosyl-L-methionine</name>
        <dbReference type="ChEBI" id="CHEBI:59789"/>
    </ligand>
</feature>
<feature type="binding site" evidence="1">
    <location>
        <position position="129"/>
    </location>
    <ligand>
        <name>S-adenosyl-L-methionine</name>
        <dbReference type="ChEBI" id="CHEBI:59789"/>
    </ligand>
</feature>
<gene>
    <name evidence="1" type="primary">ubiG</name>
    <name type="ordered locus">PMI1733</name>
</gene>